<reference key="1">
    <citation type="journal article" date="2004" name="Nucleic Acids Res.">
        <title>Thermoadaptation trait revealed by the genome sequence of thermophilic Geobacillus kaustophilus.</title>
        <authorList>
            <person name="Takami H."/>
            <person name="Takaki Y."/>
            <person name="Chee G.-J."/>
            <person name="Nishi S."/>
            <person name="Shimamura S."/>
            <person name="Suzuki H."/>
            <person name="Matsui S."/>
            <person name="Uchiyama I."/>
        </authorList>
    </citation>
    <scope>NUCLEOTIDE SEQUENCE [LARGE SCALE GENOMIC DNA]</scope>
    <source>
        <strain>HTA426</strain>
    </source>
</reference>
<gene>
    <name evidence="1" type="primary">rpmD</name>
    <name type="ordered locus">GK0124</name>
</gene>
<keyword id="KW-1185">Reference proteome</keyword>
<keyword id="KW-0687">Ribonucleoprotein</keyword>
<keyword id="KW-0689">Ribosomal protein</keyword>
<accession>Q5L3S1</accession>
<name>RL30_GEOKA</name>
<organism>
    <name type="scientific">Geobacillus kaustophilus (strain HTA426)</name>
    <dbReference type="NCBI Taxonomy" id="235909"/>
    <lineage>
        <taxon>Bacteria</taxon>
        <taxon>Bacillati</taxon>
        <taxon>Bacillota</taxon>
        <taxon>Bacilli</taxon>
        <taxon>Bacillales</taxon>
        <taxon>Anoxybacillaceae</taxon>
        <taxon>Geobacillus</taxon>
        <taxon>Geobacillus thermoleovorans group</taxon>
    </lineage>
</organism>
<evidence type="ECO:0000255" key="1">
    <source>
        <dbReference type="HAMAP-Rule" id="MF_01371"/>
    </source>
</evidence>
<evidence type="ECO:0000305" key="2"/>
<dbReference type="EMBL" id="BA000043">
    <property type="protein sequence ID" value="BAD74409.1"/>
    <property type="molecule type" value="Genomic_DNA"/>
</dbReference>
<dbReference type="RefSeq" id="WP_011229637.1">
    <property type="nucleotide sequence ID" value="NC_006510.1"/>
</dbReference>
<dbReference type="SMR" id="Q5L3S1"/>
<dbReference type="STRING" id="235909.GK0124"/>
<dbReference type="KEGG" id="gka:GK0124"/>
<dbReference type="eggNOG" id="COG1841">
    <property type="taxonomic scope" value="Bacteria"/>
</dbReference>
<dbReference type="HOGENOM" id="CLU_131047_2_1_9"/>
<dbReference type="Proteomes" id="UP000001172">
    <property type="component" value="Chromosome"/>
</dbReference>
<dbReference type="GO" id="GO:0022625">
    <property type="term" value="C:cytosolic large ribosomal subunit"/>
    <property type="evidence" value="ECO:0007669"/>
    <property type="project" value="TreeGrafter"/>
</dbReference>
<dbReference type="GO" id="GO:0003735">
    <property type="term" value="F:structural constituent of ribosome"/>
    <property type="evidence" value="ECO:0007669"/>
    <property type="project" value="InterPro"/>
</dbReference>
<dbReference type="GO" id="GO:0006412">
    <property type="term" value="P:translation"/>
    <property type="evidence" value="ECO:0007669"/>
    <property type="project" value="UniProtKB-UniRule"/>
</dbReference>
<dbReference type="CDD" id="cd01658">
    <property type="entry name" value="Ribosomal_L30"/>
    <property type="match status" value="1"/>
</dbReference>
<dbReference type="FunFam" id="3.30.1390.20:FF:000001">
    <property type="entry name" value="50S ribosomal protein L30"/>
    <property type="match status" value="1"/>
</dbReference>
<dbReference type="Gene3D" id="3.30.1390.20">
    <property type="entry name" value="Ribosomal protein L30, ferredoxin-like fold domain"/>
    <property type="match status" value="1"/>
</dbReference>
<dbReference type="HAMAP" id="MF_01371_B">
    <property type="entry name" value="Ribosomal_uL30_B"/>
    <property type="match status" value="1"/>
</dbReference>
<dbReference type="InterPro" id="IPR036919">
    <property type="entry name" value="Ribo_uL30_ferredoxin-like_sf"/>
</dbReference>
<dbReference type="InterPro" id="IPR005996">
    <property type="entry name" value="Ribosomal_uL30_bac-type"/>
</dbReference>
<dbReference type="InterPro" id="IPR018038">
    <property type="entry name" value="Ribosomal_uL30_CS"/>
</dbReference>
<dbReference type="InterPro" id="IPR016082">
    <property type="entry name" value="Ribosomal_uL30_ferredoxin-like"/>
</dbReference>
<dbReference type="NCBIfam" id="TIGR01308">
    <property type="entry name" value="rpmD_bact"/>
    <property type="match status" value="1"/>
</dbReference>
<dbReference type="PANTHER" id="PTHR15892:SF2">
    <property type="entry name" value="LARGE RIBOSOMAL SUBUNIT PROTEIN UL30M"/>
    <property type="match status" value="1"/>
</dbReference>
<dbReference type="PANTHER" id="PTHR15892">
    <property type="entry name" value="MITOCHONDRIAL RIBOSOMAL PROTEIN L30"/>
    <property type="match status" value="1"/>
</dbReference>
<dbReference type="Pfam" id="PF00327">
    <property type="entry name" value="Ribosomal_L30"/>
    <property type="match status" value="1"/>
</dbReference>
<dbReference type="PIRSF" id="PIRSF002211">
    <property type="entry name" value="Ribosomal_L30_bac-type"/>
    <property type="match status" value="1"/>
</dbReference>
<dbReference type="SUPFAM" id="SSF55129">
    <property type="entry name" value="Ribosomal protein L30p/L7e"/>
    <property type="match status" value="1"/>
</dbReference>
<dbReference type="PROSITE" id="PS00634">
    <property type="entry name" value="RIBOSOMAL_L30"/>
    <property type="match status" value="1"/>
</dbReference>
<protein>
    <recommendedName>
        <fullName evidence="1">Large ribosomal subunit protein uL30</fullName>
    </recommendedName>
    <alternativeName>
        <fullName evidence="2">50S ribosomal protein L30</fullName>
    </alternativeName>
</protein>
<proteinExistence type="inferred from homology"/>
<comment type="subunit">
    <text evidence="1">Part of the 50S ribosomal subunit.</text>
</comment>
<comment type="similarity">
    <text evidence="1">Belongs to the universal ribosomal protein uL30 family.</text>
</comment>
<sequence>MAKKLAITLTRSVIGRPEDQRVTVRTLGLRKMHQTVIHNDNPAIRGMINKVAHLVKVKEIEE</sequence>
<feature type="chain" id="PRO_0000273792" description="Large ribosomal subunit protein uL30">
    <location>
        <begin position="1"/>
        <end position="62"/>
    </location>
</feature>